<comment type="function">
    <text evidence="2">Subunit of the oligosaccharyl transferase (OST) complex that catalyzes the initial transfer of a defined glycan (Glc(3)Man(9)GlcNAc(2) in eukaryotes) from the lipid carrier dolichol-pyrophosphate to an asparagine residue within an Asn-X-Ser/Thr consensus motif in nascent polypeptide chains, the first step in protein N-glycosylation. N-glycosylation occurs cotranslationally and the complex associates with the Sec61 complex at the channel-forming translocon complex that mediates protein translocation across the endoplasmic reticulum (ER). All subunits are required for a maximal enzyme activity.</text>
</comment>
<comment type="subunit">
    <text evidence="2">Component of the oligosaccharyltransferase (OST) complex.</text>
</comment>
<comment type="subcellular location">
    <subcellularLocation>
        <location evidence="1">Endoplasmic reticulum membrane</location>
        <topology evidence="1">Single-pass type III membrane protein</topology>
    </subcellularLocation>
</comment>
<comment type="similarity">
    <text evidence="4">Belongs to the OST4 family.</text>
</comment>
<evidence type="ECO:0000250" key="1"/>
<evidence type="ECO:0000250" key="2">
    <source>
        <dbReference type="UniProtKB" id="P0C6T2"/>
    </source>
</evidence>
<evidence type="ECO:0000250" key="3">
    <source>
        <dbReference type="UniProtKB" id="Q99380"/>
    </source>
</evidence>
<evidence type="ECO:0000255" key="4"/>
<evidence type="ECO:0000312" key="5">
    <source>
        <dbReference type="EMBL" id="EDW47097.1"/>
    </source>
</evidence>
<organism>
    <name type="scientific">Drosophila sechellia</name>
    <name type="common">Fruit fly</name>
    <dbReference type="NCBI Taxonomy" id="7238"/>
    <lineage>
        <taxon>Eukaryota</taxon>
        <taxon>Metazoa</taxon>
        <taxon>Ecdysozoa</taxon>
        <taxon>Arthropoda</taxon>
        <taxon>Hexapoda</taxon>
        <taxon>Insecta</taxon>
        <taxon>Pterygota</taxon>
        <taxon>Neoptera</taxon>
        <taxon>Endopterygota</taxon>
        <taxon>Diptera</taxon>
        <taxon>Brachycera</taxon>
        <taxon>Muscomorpha</taxon>
        <taxon>Ephydroidea</taxon>
        <taxon>Drosophilidae</taxon>
        <taxon>Drosophila</taxon>
        <taxon>Sophophora</taxon>
    </lineage>
</organism>
<dbReference type="EMBL" id="CH480816">
    <property type="protein sequence ID" value="EDW47097.1"/>
    <property type="molecule type" value="Genomic_DNA"/>
</dbReference>
<dbReference type="SMR" id="B4HSS0"/>
<dbReference type="STRING" id="7238.B4HSS0"/>
<dbReference type="EnsemblMetazoa" id="FBtr0203589">
    <property type="protein sequence ID" value="FBpp0202081"/>
    <property type="gene ID" value="FBgn0175486"/>
</dbReference>
<dbReference type="EnsemblMetazoa" id="XM_002033048.2">
    <property type="protein sequence ID" value="XP_002033084.1"/>
    <property type="gene ID" value="LOC6608347"/>
</dbReference>
<dbReference type="GeneID" id="6608347"/>
<dbReference type="KEGG" id="dse:6608347"/>
<dbReference type="HOGENOM" id="CLU_186352_2_0_1"/>
<dbReference type="PhylomeDB" id="B4HSS0"/>
<dbReference type="Proteomes" id="UP000001292">
    <property type="component" value="Unassembled WGS sequence"/>
</dbReference>
<dbReference type="GO" id="GO:0008250">
    <property type="term" value="C:oligosaccharyltransferase complex"/>
    <property type="evidence" value="ECO:0000250"/>
    <property type="project" value="UniProtKB"/>
</dbReference>
<dbReference type="GO" id="GO:0006487">
    <property type="term" value="P:protein N-linked glycosylation"/>
    <property type="evidence" value="ECO:0000250"/>
    <property type="project" value="UniProtKB"/>
</dbReference>
<dbReference type="GO" id="GO:0018279">
    <property type="term" value="P:protein N-linked glycosylation via asparagine"/>
    <property type="evidence" value="ECO:0007669"/>
    <property type="project" value="TreeGrafter"/>
</dbReference>
<dbReference type="InterPro" id="IPR018943">
    <property type="entry name" value="Oligosaccaryltransferase"/>
</dbReference>
<dbReference type="InterPro" id="IPR051307">
    <property type="entry name" value="OST4"/>
</dbReference>
<dbReference type="InterPro" id="IPR036330">
    <property type="entry name" value="Ost4p_sf"/>
</dbReference>
<dbReference type="PANTHER" id="PTHR48164">
    <property type="entry name" value="DOLICHYL-DIPHOSPHOOLIGOSACCHARIDE--PROTEIN GLYCOSYLTRANSFERASE SUBUNIT 4"/>
    <property type="match status" value="1"/>
</dbReference>
<dbReference type="PANTHER" id="PTHR48164:SF1">
    <property type="entry name" value="DOLICHYL-DIPHOSPHOOLIGOSACCHARIDE--PROTEIN GLYCOSYLTRANSFERASE SUBUNIT 4"/>
    <property type="match status" value="1"/>
</dbReference>
<dbReference type="Pfam" id="PF10215">
    <property type="entry name" value="Ost4"/>
    <property type="match status" value="1"/>
</dbReference>
<dbReference type="SUPFAM" id="SSF103464">
    <property type="entry name" value="Oligosaccharyltransferase subunit ost4p"/>
    <property type="match status" value="1"/>
</dbReference>
<keyword id="KW-0256">Endoplasmic reticulum</keyword>
<keyword id="KW-0472">Membrane</keyword>
<keyword id="KW-1185">Reference proteome</keyword>
<keyword id="KW-0735">Signal-anchor</keyword>
<keyword id="KW-0812">Transmembrane</keyword>
<keyword id="KW-1133">Transmembrane helix</keyword>
<protein>
    <recommendedName>
        <fullName evidence="3">Dolichyl-diphosphooligosaccharide--protein glycosyltransferase subunit 4</fullName>
    </recommendedName>
</protein>
<reference evidence="5" key="1">
    <citation type="journal article" date="2007" name="Nature">
        <title>Evolution of genes and genomes on the Drosophila phylogeny.</title>
        <authorList>
            <consortium name="Drosophila 12 genomes consortium"/>
        </authorList>
    </citation>
    <scope>NUCLEOTIDE SEQUENCE [LARGE SCALE GENOMIC DNA]</scope>
    <source>
        <strain evidence="5">Rob3c / Tucson 14021-0248.25</strain>
    </source>
</reference>
<sequence length="40" mass="4400">MITDMQLAIFSNVLGVFLFLLVVAYHYINANTGKPSAKAK</sequence>
<name>OST4_DROSE</name>
<proteinExistence type="inferred from homology"/>
<feature type="chain" id="PRO_0000386614" description="Dolichyl-diphosphooligosaccharide--protein glycosyltransferase subunit 4">
    <location>
        <begin position="1"/>
        <end position="40"/>
    </location>
</feature>
<feature type="topological domain" description="Lumenal" evidence="4">
    <location>
        <begin position="1"/>
        <end position="7"/>
    </location>
</feature>
<feature type="transmembrane region" description="Helical" evidence="4">
    <location>
        <begin position="8"/>
        <end position="28"/>
    </location>
</feature>
<feature type="topological domain" description="Cytoplasmic" evidence="4">
    <location>
        <begin position="29"/>
        <end position="40"/>
    </location>
</feature>
<accession>B4HSS0</accession>
<gene>
    <name type="ORF">GM20604</name>
</gene>